<keyword id="KW-0002">3D-structure</keyword>
<keyword id="KW-1262">Eukaryotic host gene expression shutoff by virus</keyword>
<keyword id="KW-1191">Eukaryotic host transcription shutoff by virus</keyword>
<keyword id="KW-1035">Host cytoplasm</keyword>
<keyword id="KW-1190">Host gene expression shutoff by virus</keyword>
<keyword id="KW-1048">Host nucleus</keyword>
<keyword id="KW-0945">Host-virus interaction</keyword>
<keyword id="KW-1104">Inhibition of host RNA polymerase II by virus</keyword>
<keyword id="KW-0547">Nucleotide-binding</keyword>
<keyword id="KW-0548">Nucleotidyltransferase</keyword>
<keyword id="KW-0597">Phosphoprotein</keyword>
<keyword id="KW-1185">Reference proteome</keyword>
<keyword id="KW-0696">RNA-directed RNA polymerase</keyword>
<keyword id="KW-0808">Transferase</keyword>
<keyword id="KW-0693">Viral RNA replication</keyword>
<keyword id="KW-1195">Viral transcription</keyword>
<accession>Q9Q0V0</accession>
<dbReference type="EC" id="2.7.7.48" evidence="1"/>
<dbReference type="EMBL" id="AF144301">
    <property type="protein sequence ID" value="AAD51923.1"/>
    <property type="molecule type" value="Genomic_RNA"/>
</dbReference>
<dbReference type="RefSeq" id="YP_308665.1">
    <property type="nucleotide sequence ID" value="NC_007358.1"/>
</dbReference>
<dbReference type="PDB" id="3J9B">
    <property type="method" value="EM"/>
    <property type="resolution" value="4.30 A"/>
    <property type="chains" value="B/I=1-24"/>
</dbReference>
<dbReference type="PDB" id="8H69">
    <property type="method" value="EM"/>
    <property type="resolution" value="3.70 A"/>
    <property type="chains" value="B=1-757"/>
</dbReference>
<dbReference type="PDB" id="8WO9">
    <property type="method" value="X-ray"/>
    <property type="resolution" value="1.55 A"/>
    <property type="chains" value="C=342-350"/>
</dbReference>
<dbReference type="PDBsum" id="3J9B"/>
<dbReference type="PDBsum" id="8H69"/>
<dbReference type="PDBsum" id="8WO9"/>
<dbReference type="SMR" id="Q9Q0V0"/>
<dbReference type="DIP" id="DIP-59838N"/>
<dbReference type="IntAct" id="Q9Q0V0">
    <property type="interactions" value="2"/>
</dbReference>
<dbReference type="MINT" id="Q9Q0V0"/>
<dbReference type="GeneID" id="3654616"/>
<dbReference type="KEGG" id="vg:3654616"/>
<dbReference type="OrthoDB" id="2346at10239"/>
<dbReference type="EvolutionaryTrace" id="Q9Q0V0"/>
<dbReference type="Proteomes" id="UP000131152">
    <property type="component" value="Genome"/>
</dbReference>
<dbReference type="GO" id="GO:0030430">
    <property type="term" value="C:host cell cytoplasm"/>
    <property type="evidence" value="ECO:0007669"/>
    <property type="project" value="UniProtKB-SubCell"/>
</dbReference>
<dbReference type="GO" id="GO:0042025">
    <property type="term" value="C:host cell nucleus"/>
    <property type="evidence" value="ECO:0007669"/>
    <property type="project" value="UniProtKB-SubCell"/>
</dbReference>
<dbReference type="GO" id="GO:0042802">
    <property type="term" value="F:identical protein binding"/>
    <property type="evidence" value="ECO:0000353"/>
    <property type="project" value="IntAct"/>
</dbReference>
<dbReference type="GO" id="GO:0000166">
    <property type="term" value="F:nucleotide binding"/>
    <property type="evidence" value="ECO:0007669"/>
    <property type="project" value="UniProtKB-UniRule"/>
</dbReference>
<dbReference type="GO" id="GO:0003723">
    <property type="term" value="F:RNA binding"/>
    <property type="evidence" value="ECO:0007669"/>
    <property type="project" value="InterPro"/>
</dbReference>
<dbReference type="GO" id="GO:0003968">
    <property type="term" value="F:RNA-directed RNA polymerase activity"/>
    <property type="evidence" value="ECO:0007669"/>
    <property type="project" value="UniProtKB-UniRule"/>
</dbReference>
<dbReference type="GO" id="GO:0006351">
    <property type="term" value="P:DNA-templated transcription"/>
    <property type="evidence" value="ECO:0007669"/>
    <property type="project" value="UniProtKB-UniRule"/>
</dbReference>
<dbReference type="GO" id="GO:0039657">
    <property type="term" value="P:symbiont-mediated suppression of host gene expression"/>
    <property type="evidence" value="ECO:0007669"/>
    <property type="project" value="UniProtKB-KW"/>
</dbReference>
<dbReference type="GO" id="GO:0039523">
    <property type="term" value="P:symbiont-mediated suppression of host mRNA transcription via inhibition of RNA polymerase II activity"/>
    <property type="evidence" value="ECO:0007669"/>
    <property type="project" value="UniProtKB-UniRule"/>
</dbReference>
<dbReference type="GO" id="GO:0039694">
    <property type="term" value="P:viral RNA genome replication"/>
    <property type="evidence" value="ECO:0007669"/>
    <property type="project" value="UniProtKB-UniRule"/>
</dbReference>
<dbReference type="GO" id="GO:0019083">
    <property type="term" value="P:viral transcription"/>
    <property type="evidence" value="ECO:0007669"/>
    <property type="project" value="UniProtKB-KW"/>
</dbReference>
<dbReference type="Gene3D" id="6.10.140.720">
    <property type="match status" value="1"/>
</dbReference>
<dbReference type="HAMAP" id="MF_04065">
    <property type="entry name" value="INFV_RDRP"/>
    <property type="match status" value="1"/>
</dbReference>
<dbReference type="InterPro" id="IPR007099">
    <property type="entry name" value="RNA-dir_pol_NSvirus"/>
</dbReference>
<dbReference type="InterPro" id="IPR001407">
    <property type="entry name" value="RNA_pol_PB1_influenza"/>
</dbReference>
<dbReference type="Pfam" id="PF00602">
    <property type="entry name" value="Flu_PB1"/>
    <property type="match status" value="1"/>
</dbReference>
<dbReference type="PIRSF" id="PIRSF000827">
    <property type="entry name" value="RdRPol_OMV"/>
    <property type="match status" value="1"/>
</dbReference>
<dbReference type="PROSITE" id="PS50525">
    <property type="entry name" value="RDRP_SSRNA_NEG_SEG"/>
    <property type="match status" value="1"/>
</dbReference>
<organismHost>
    <name type="scientific">Aves</name>
    <dbReference type="NCBI Taxonomy" id="8782"/>
</organismHost>
<organismHost>
    <name type="scientific">Felis catus</name>
    <name type="common">Cat</name>
    <name type="synonym">Felis silvestris catus</name>
    <dbReference type="NCBI Taxonomy" id="9685"/>
</organismHost>
<organismHost>
    <name type="scientific">Homo sapiens</name>
    <name type="common">Human</name>
    <dbReference type="NCBI Taxonomy" id="9606"/>
</organismHost>
<organismHost>
    <name type="scientific">Panthera pardus</name>
    <name type="common">Leopard</name>
    <name type="synonym">Felis pardus</name>
    <dbReference type="NCBI Taxonomy" id="9691"/>
</organismHost>
<organismHost>
    <name type="scientific">Panthera tigris</name>
    <name type="common">Tiger</name>
    <dbReference type="NCBI Taxonomy" id="9694"/>
</organismHost>
<organismHost>
    <name type="scientific">Sus scrofa</name>
    <name type="common">Pig</name>
    <dbReference type="NCBI Taxonomy" id="9823"/>
</organismHost>
<proteinExistence type="evidence at protein level"/>
<comment type="function">
    <text evidence="1">RNA-dependent RNA polymerase which is responsible for replication and transcription of virus RNA segments. The transcription of viral mRNAs occurs by a unique mechanism called cap-snatching. 5' methylated caps of cellular mRNAs are cleaved after 10-13 nucleotides by PA. In turn, these short capped RNAs are used as primers by PB1 for transcription of viral mRNAs. During virus replication, PB1 initiates RNA synthesis and copy vRNA into complementary RNA (cRNA) which in turn serves as a template for the production of more vRNAs.</text>
</comment>
<comment type="catalytic activity">
    <reaction evidence="1">
        <text>RNA(n) + a ribonucleoside 5'-triphosphate = RNA(n+1) + diphosphate</text>
        <dbReference type="Rhea" id="RHEA:21248"/>
        <dbReference type="Rhea" id="RHEA-COMP:14527"/>
        <dbReference type="Rhea" id="RHEA-COMP:17342"/>
        <dbReference type="ChEBI" id="CHEBI:33019"/>
        <dbReference type="ChEBI" id="CHEBI:61557"/>
        <dbReference type="ChEBI" id="CHEBI:140395"/>
        <dbReference type="EC" id="2.7.7.48"/>
    </reaction>
</comment>
<comment type="subunit">
    <text evidence="1">Influenza RNA polymerase is composed of three subunits: PB1, PB2 and PA. Interacts (via N-terminus) with PA (via C-terminus). Interacts (via C-terminus) with PB2 (via N-terminus); this interaction is essential for transcription initiation.</text>
</comment>
<comment type="interaction">
    <interactant intactId="EBI-8290908">
        <id>Q9Q0V0</id>
    </interactant>
    <interactant intactId="EBI-15715136">
        <id>Q9Q0U9</id>
        <label>PA</label>
    </interactant>
    <organismsDiffer>false</organismsDiffer>
    <experiments>3</experiments>
</comment>
<comment type="interaction">
    <interactant intactId="EBI-8290908">
        <id>Q9Q0V0</id>
    </interactant>
    <interactant intactId="EBI-8290908">
        <id>Q9Q0V0</id>
        <label>PB1</label>
    </interactant>
    <organismsDiffer>false</organismsDiffer>
    <experiments>6</experiments>
</comment>
<comment type="interaction">
    <interactant intactId="EBI-8290908">
        <id>Q9Q0V0</id>
    </interactant>
    <interactant intactId="EBI-8290926">
        <id>Q9Q0V1</id>
        <label>PB2</label>
    </interactant>
    <organismsDiffer>false</organismsDiffer>
    <experiments>2</experiments>
</comment>
<comment type="subcellular location">
    <subcellularLocation>
        <location evidence="1">Host nucleus</location>
    </subcellularLocation>
    <subcellularLocation>
        <location evidence="1">Host cytoplasm</location>
    </subcellularLocation>
</comment>
<comment type="PTM">
    <text evidence="1">Phosphorylated by host PRKCA.</text>
</comment>
<comment type="similarity">
    <text evidence="1">Belongs to the influenza viruses polymerase PB1 family.</text>
</comment>
<sequence length="757" mass="86177">MDVNPTLLFLKVPAQNAISTTFPYTGDPPYSHGTGTGYTMDTVNRTHQYSEKGKWTTNTETGAPQLNPIDGPLPEDNEPSGYAQTDCVLEAMAFLEESHPGIFENSCLETMEVVQQTRVDKLTQGRQTYDWTLKRNQPAATALANTIEVFRSNGLTANESGRLIDFLKDVMESMDKGEMEIITHFQRKRRVRDNMTKKMVTQRTIGKKKQRLNKRSYLIRALTLNTMTKDAERGKLKRRAIATPGMQIRGFVYFVETLARSICEKLEQSGLPVGGNEKKAKLANVVRKMMTNSQDTELSFTITGDNTKWNENQNPRMFLAMITYITRNQPEWFRNVLSIAPIMFSNKMARLGKGYMFESKSMKLRTQIPAEMLASIDLKYFNESTRKKIEKIRPLLIDGTASLSPGMMMGMFNMLSTVLGVSILNLGQKRYTKTTYWWDGLQSSDDFALIVNAPNHEGIEAGVDRFYRTCKLVGINMTKKKSYINRTGTCEFTSFFYRYGFVANFSMELPSFGVSGINESADMSIGVTVIKNNMMDNDLGPATAQMALQLFIKDYRYPYRCHRGDTQIQTRRSFELKKLWEQTRSKAGLLVSDGGPNPYNIRNLHIPEAGLKWELMDEDYQGRLCNPLNPFVSHKEIESVNNAVVMPAHGPAKSMEYDAVATTHSWIPKRNRSILNTSQRGILEDEQMYQKCCNLFEKFFPSSSYRRPVGISSMVEAMVSRARIDARIDFESGRIKKEEFAEIMKICSTIEELGRQK</sequence>
<reference key="1">
    <citation type="journal article" date="1999" name="Virology">
        <title>Genetic characterization of the pathogenic influenza A/Goose/Guangdong/1/96 (H5N1) virus: similarity of its hemagglutinin gene to those of H5N1 viruses from the 1997 outbreaks in Hong Kong.</title>
        <authorList>
            <person name="Xu X."/>
            <person name="Subbarao K."/>
            <person name="Cox N.J."/>
            <person name="Guo Y."/>
        </authorList>
    </citation>
    <scope>NUCLEOTIDE SEQUENCE [GENOMIC RNA]</scope>
</reference>
<gene>
    <name evidence="1" type="primary">PB1</name>
</gene>
<evidence type="ECO:0000255" key="1">
    <source>
        <dbReference type="HAMAP-Rule" id="MF_04065"/>
    </source>
</evidence>
<evidence type="ECO:0000256" key="2">
    <source>
        <dbReference type="SAM" id="MobiDB-lite"/>
    </source>
</evidence>
<organism>
    <name type="scientific">Influenza A virus (strain A/Goose/Guangdong/1/1996 H5N1 genotype Gs/Gd)</name>
    <dbReference type="NCBI Taxonomy" id="93838"/>
    <lineage>
        <taxon>Viruses</taxon>
        <taxon>Riboviria</taxon>
        <taxon>Orthornavirae</taxon>
        <taxon>Negarnaviricota</taxon>
        <taxon>Polyploviricotina</taxon>
        <taxon>Insthoviricetes</taxon>
        <taxon>Articulavirales</taxon>
        <taxon>Orthomyxoviridae</taxon>
        <taxon>Alphainfluenzavirus</taxon>
        <taxon>Alphainfluenzavirus influenzae</taxon>
        <taxon>Influenza A virus</taxon>
    </lineage>
</organism>
<feature type="chain" id="PRO_0000279596" description="RNA-directed RNA polymerase catalytic subunit">
    <location>
        <begin position="1"/>
        <end position="757"/>
    </location>
</feature>
<feature type="domain" description="RdRp catalytic" evidence="1">
    <location>
        <begin position="286"/>
        <end position="483"/>
    </location>
</feature>
<feature type="region of interest" description="Disordered" evidence="2">
    <location>
        <begin position="50"/>
        <end position="82"/>
    </location>
</feature>
<feature type="region of interest" description="Promoter-binding site" evidence="1">
    <location>
        <begin position="249"/>
        <end position="256"/>
    </location>
</feature>
<feature type="short sequence motif" description="Nuclear localization signal" evidence="1">
    <location>
        <begin position="187"/>
        <end position="195"/>
    </location>
</feature>
<feature type="short sequence motif" description="Nuclear localization signal" evidence="1">
    <location>
        <begin position="203"/>
        <end position="216"/>
    </location>
</feature>
<feature type="compositionally biased region" description="Polar residues" evidence="2">
    <location>
        <begin position="55"/>
        <end position="64"/>
    </location>
</feature>
<protein>
    <recommendedName>
        <fullName evidence="1">RNA-directed RNA polymerase catalytic subunit</fullName>
        <ecNumber evidence="1">2.7.7.48</ecNumber>
    </recommendedName>
    <alternativeName>
        <fullName evidence="1">Polymerase basic protein 1</fullName>
        <shortName evidence="1">PB1</shortName>
    </alternativeName>
    <alternativeName>
        <fullName evidence="1">RNA-directed RNA polymerase subunit P1</fullName>
    </alternativeName>
</protein>
<name>RDRP_I96A0</name>